<evidence type="ECO:0000255" key="1">
    <source>
        <dbReference type="HAMAP-Rule" id="MF_04000"/>
    </source>
</evidence>
<evidence type="ECO:0000256" key="2">
    <source>
        <dbReference type="SAM" id="MobiDB-lite"/>
    </source>
</evidence>
<gene>
    <name evidence="1" type="primary">E1</name>
</gene>
<comment type="function">
    <text evidence="1">ATP-dependent DNA 3'-5' helicase required for initiation of viral DNA replication. It forms a complex with the viral E2 protein. The E1-E2 complex binds to the replication origin which contains binding sites for both proteins. During the initial step, a dimer of E1 interacts with a dimer of protein E2 leading to a complex that binds the viral origin of replication with high specificity. Then, a second dimer of E1 displaces the E2 dimer in an ATP-dependent manner to form the E1 tetramer. Following this, two E1 monomers are added to each half of the site, which results in the formation of two E1 trimers on the viral ori. Subsequently, two hexamers will be created. The double hexamer acts as a bi-directional helicase machinery and unwinds the viral DNA and then recruits the host DNA polymerase to start replication.</text>
</comment>
<comment type="catalytic activity">
    <reaction evidence="1">
        <text>Couples ATP hydrolysis with the unwinding of duplex DNA by translocating in the 3'-5' direction.</text>
        <dbReference type="EC" id="5.6.2.4"/>
    </reaction>
</comment>
<comment type="catalytic activity">
    <reaction evidence="1">
        <text>ATP + H2O = ADP + phosphate + H(+)</text>
        <dbReference type="Rhea" id="RHEA:13065"/>
        <dbReference type="ChEBI" id="CHEBI:15377"/>
        <dbReference type="ChEBI" id="CHEBI:15378"/>
        <dbReference type="ChEBI" id="CHEBI:30616"/>
        <dbReference type="ChEBI" id="CHEBI:43474"/>
        <dbReference type="ChEBI" id="CHEBI:456216"/>
        <dbReference type="EC" id="5.6.2.4"/>
    </reaction>
</comment>
<comment type="subunit">
    <text evidence="1">Can form hexamers. Interacts with E2 protein; this interaction increases E1 DNA binding specificity. Interacts with host DNA polymerase subunit POLA2. Interacts with host single stranded DNA-binding protein RPA1. Interacts with host TOP1; this interaction stimulates the enzymatic activity of TOP1.</text>
</comment>
<comment type="subcellular location">
    <subcellularLocation>
        <location evidence="1">Host nucleus</location>
    </subcellularLocation>
</comment>
<comment type="PTM">
    <text evidence="1">Phosphorylated.</text>
</comment>
<comment type="PTM">
    <text evidence="1">Sumoylated.</text>
</comment>
<comment type="similarity">
    <text evidence="1">Belongs to the papillomaviridae E1 protein family.</text>
</comment>
<sequence length="597" mass="67983">MAARKGTDSETEDGGWVLIEADCSEVDSADETSENASNVSDLVDNASIAETQGLSLQLFQQQELTECEEQLQQLKRKFVQSPQSRDLCSLSPQLASISLTPRTSKKVKKQLFATDSGIQSSNEADDSLEGQRQVEPLPGREENGADALFKVRDKRAFLYSKFKSSFGISFTDLTRVYNSDKTCSSDWVVCLYHVSDDRREAGKTLLQDHCEYFFLHSMGFCTLLLLCLFVPKCRNTLFKLCRSLFHISNVQMLADPPKTRSPAVALYWYKKGFASGTFTHGELPSWIAQQTLITHHLAAEKTFDLSEMVQWAYDNDLKDESEIAYKYAALAETDENALAFLKSNNQPKHVKDCATMCRYYKKAEMKRLSMSQWIDERCKATDDGPGDWKEVVKFLRHQGIEFILFLADFKRFLRGRPKKNCLVFWGPPNTGKSMFCMSLLSFLHGVVISYVNSKSHFWLQPLTEGKMGLLDDATRPCWLYIDTYLRNALDGNTFSVDCKHKAPLQLKCPPLLITTNVNVCGDEKFKYLRSRCSFFHFPQEFPLDDNGNPGFQLNDQSWASFFKRFWKHLDLSDPEDGEDGETQRGLRLTARGTTESV</sequence>
<keyword id="KW-0067">ATP-binding</keyword>
<keyword id="KW-0235">DNA replication</keyword>
<keyword id="KW-0238">DNA-binding</keyword>
<keyword id="KW-0244">Early protein</keyword>
<keyword id="KW-0347">Helicase</keyword>
<keyword id="KW-1048">Host nucleus</keyword>
<keyword id="KW-0378">Hydrolase</keyword>
<keyword id="KW-0413">Isomerase</keyword>
<keyword id="KW-1017">Isopeptide bond</keyword>
<keyword id="KW-0547">Nucleotide-binding</keyword>
<keyword id="KW-0597">Phosphoprotein</keyword>
<keyword id="KW-1185">Reference proteome</keyword>
<keyword id="KW-0832">Ubl conjugation</keyword>
<organismHost>
    <name type="scientific">Canis lupus familiaris</name>
    <name type="common">Dog</name>
    <name type="synonym">Canis familiaris</name>
    <dbReference type="NCBI Taxonomy" id="9615"/>
</organismHost>
<accession>Q89536</accession>
<feature type="chain" id="PRO_0000133165" description="Replication protein E1">
    <location>
        <begin position="1"/>
        <end position="597"/>
    </location>
</feature>
<feature type="domain" description="SF3 helicase" evidence="1">
    <location>
        <begin position="400"/>
        <end position="550"/>
    </location>
</feature>
<feature type="region of interest" description="Disordered" evidence="2">
    <location>
        <begin position="119"/>
        <end position="141"/>
    </location>
</feature>
<feature type="region of interest" description="DNA-binding region" evidence="1">
    <location>
        <begin position="137"/>
        <end position="300"/>
    </location>
</feature>
<feature type="region of interest" description="Disordered" evidence="2">
    <location>
        <begin position="574"/>
        <end position="597"/>
    </location>
</feature>
<feature type="short sequence motif" description="Nuclear localization signal" evidence="1">
    <location>
        <begin position="75"/>
        <end position="77"/>
    </location>
</feature>
<feature type="short sequence motif" description="Nuclear export signal" evidence="1">
    <location>
        <begin position="90"/>
        <end position="99"/>
    </location>
</feature>
<feature type="binding site" evidence="1">
    <location>
        <begin position="426"/>
        <end position="433"/>
    </location>
    <ligand>
        <name>ATP</name>
        <dbReference type="ChEBI" id="CHEBI:30616"/>
    </ligand>
</feature>
<feature type="modified residue" description="Phosphoserine; by host" evidence="1">
    <location>
        <position position="81"/>
    </location>
</feature>
<feature type="modified residue" description="Phosphoserine; by host" evidence="1">
    <location>
        <position position="91"/>
    </location>
</feature>
<feature type="modified residue" description="Phosphoserine; by host" evidence="1">
    <location>
        <position position="104"/>
    </location>
</feature>
<feature type="cross-link" description="Glycyl lysine isopeptide (Lys-Gly) (interchain with G-Cter in SUMO)" evidence="1">
    <location>
        <position position="507"/>
    </location>
</feature>
<reference key="1">
    <citation type="journal article" date="1994" name="Virology">
        <title>Canine oral papillomavirus genomic sequence: a unique 1.5-kb intervening sequence between the E2 and L2 open reading frames.</title>
        <authorList>
            <person name="Delius H."/>
            <person name="van Ranst M.A."/>
            <person name="Jenson A.B."/>
            <person name="zur Hausen H."/>
            <person name="Sundberg J.P."/>
        </authorList>
    </citation>
    <scope>NUCLEOTIDE SEQUENCE [GENOMIC DNA]</scope>
</reference>
<reference key="2">
    <citation type="journal article" date="1995" name="Int. J. Oncol.">
        <title>Nucleotide sequence of a canine oral papillomavirus containing a long noncoding region.</title>
        <authorList>
            <person name="Isegawa N."/>
            <person name="Ohta M."/>
            <person name="Shirasawa H."/>
            <person name="Tokita H."/>
            <person name="Simizu B."/>
            <person name="Yamaura A."/>
        </authorList>
    </citation>
    <scope>NUCLEOTIDE SEQUENCE [GENOMIC DNA]</scope>
</reference>
<name>VE1_COPV6</name>
<dbReference type="EC" id="5.6.2.4" evidence="1"/>
<dbReference type="EMBL" id="D55633">
    <property type="protein sequence ID" value="BAA09500.1"/>
    <property type="molecule type" value="Genomic_DNA"/>
</dbReference>
<dbReference type="EMBL" id="L22695">
    <property type="protein sequence ID" value="AAA61746.1"/>
    <property type="molecule type" value="Genomic_DNA"/>
</dbReference>
<dbReference type="RefSeq" id="NP_056815.1">
    <property type="nucleotide sequence ID" value="NC_001619.1"/>
</dbReference>
<dbReference type="SMR" id="Q89536"/>
<dbReference type="GeneID" id="1497240"/>
<dbReference type="KEGG" id="vg:1497240"/>
<dbReference type="Proteomes" id="UP000008788">
    <property type="component" value="Segment"/>
</dbReference>
<dbReference type="Proteomes" id="UP000097271">
    <property type="component" value="Genome"/>
</dbReference>
<dbReference type="GO" id="GO:0042025">
    <property type="term" value="C:host cell nucleus"/>
    <property type="evidence" value="ECO:0007669"/>
    <property type="project" value="UniProtKB-SubCell"/>
</dbReference>
<dbReference type="GO" id="GO:0005524">
    <property type="term" value="F:ATP binding"/>
    <property type="evidence" value="ECO:0007669"/>
    <property type="project" value="UniProtKB-UniRule"/>
</dbReference>
<dbReference type="GO" id="GO:0016887">
    <property type="term" value="F:ATP hydrolysis activity"/>
    <property type="evidence" value="ECO:0007669"/>
    <property type="project" value="RHEA"/>
</dbReference>
<dbReference type="GO" id="GO:0003677">
    <property type="term" value="F:DNA binding"/>
    <property type="evidence" value="ECO:0007669"/>
    <property type="project" value="UniProtKB-UniRule"/>
</dbReference>
<dbReference type="GO" id="GO:0003678">
    <property type="term" value="F:DNA helicase activity"/>
    <property type="evidence" value="ECO:0007669"/>
    <property type="project" value="UniProtKB-UniRule"/>
</dbReference>
<dbReference type="GO" id="GO:0006260">
    <property type="term" value="P:DNA replication"/>
    <property type="evidence" value="ECO:0007669"/>
    <property type="project" value="UniProtKB-UniRule"/>
</dbReference>
<dbReference type="Gene3D" id="3.40.1310.10">
    <property type="match status" value="1"/>
</dbReference>
<dbReference type="Gene3D" id="3.40.50.300">
    <property type="entry name" value="P-loop containing nucleotide triphosphate hydrolases"/>
    <property type="match status" value="1"/>
</dbReference>
<dbReference type="Gene3D" id="1.10.10.510">
    <property type="entry name" value="Zinc finger, large T-antigen D1 domain"/>
    <property type="match status" value="1"/>
</dbReference>
<dbReference type="HAMAP" id="MF_04000">
    <property type="entry name" value="PPV_E1"/>
    <property type="match status" value="1"/>
</dbReference>
<dbReference type="InterPro" id="IPR014015">
    <property type="entry name" value="Helicase_SF3_DNA-vir"/>
</dbReference>
<dbReference type="InterPro" id="IPR027417">
    <property type="entry name" value="P-loop_NTPase"/>
</dbReference>
<dbReference type="InterPro" id="IPR001177">
    <property type="entry name" value="PPV_DNA_helicase_E1_C"/>
</dbReference>
<dbReference type="InterPro" id="IPR014000">
    <property type="entry name" value="PPV_DNA_helicase_E1_N"/>
</dbReference>
<dbReference type="InterPro" id="IPR046832">
    <property type="entry name" value="PPV_E1_DBD"/>
</dbReference>
<dbReference type="InterPro" id="IPR046935">
    <property type="entry name" value="PPV_E1_DBD_sf"/>
</dbReference>
<dbReference type="InterPro" id="IPR016393">
    <property type="entry name" value="Rep_E1_papillomaV"/>
</dbReference>
<dbReference type="InterPro" id="IPR037102">
    <property type="entry name" value="Znf_lg_T-Ag_D1_dom_sf"/>
</dbReference>
<dbReference type="Pfam" id="PF00519">
    <property type="entry name" value="PPV_E1_C"/>
    <property type="match status" value="1"/>
</dbReference>
<dbReference type="Pfam" id="PF20450">
    <property type="entry name" value="PPV_E1_DBD"/>
    <property type="match status" value="1"/>
</dbReference>
<dbReference type="Pfam" id="PF00524">
    <property type="entry name" value="PPV_E1_N"/>
    <property type="match status" value="1"/>
</dbReference>
<dbReference type="PIRSF" id="PIRSF003383">
    <property type="entry name" value="Rep_E1_papillomaV"/>
    <property type="match status" value="1"/>
</dbReference>
<dbReference type="SUPFAM" id="SSF55464">
    <property type="entry name" value="Origin of replication-binding domain, RBD-like"/>
    <property type="match status" value="1"/>
</dbReference>
<dbReference type="SUPFAM" id="SSF52540">
    <property type="entry name" value="P-loop containing nucleoside triphosphate hydrolases"/>
    <property type="match status" value="1"/>
</dbReference>
<dbReference type="PROSITE" id="PS51206">
    <property type="entry name" value="SF3_HELICASE_1"/>
    <property type="match status" value="1"/>
</dbReference>
<protein>
    <recommendedName>
        <fullName evidence="1">Replication protein E1</fullName>
        <ecNumber evidence="1">5.6.2.4</ecNumber>
    </recommendedName>
    <alternativeName>
        <fullName evidence="1">ATP-dependent helicase E1</fullName>
    </alternativeName>
    <alternativeName>
        <fullName evidence="1">DNA 3'-5' helicase E1</fullName>
    </alternativeName>
</protein>
<proteinExistence type="inferred from homology"/>
<organism>
    <name type="scientific">Canine oral papillomavirus (strain Y62)</name>
    <name type="common">COPV</name>
    <dbReference type="NCBI Taxonomy" id="766192"/>
    <lineage>
        <taxon>Viruses</taxon>
        <taxon>Monodnaviria</taxon>
        <taxon>Shotokuvirae</taxon>
        <taxon>Cossaviricota</taxon>
        <taxon>Papovaviricetes</taxon>
        <taxon>Zurhausenvirales</taxon>
        <taxon>Papillomaviridae</taxon>
        <taxon>Firstpapillomavirinae</taxon>
        <taxon>Lambdapapillomavirus</taxon>
        <taxon>Canine oral papillomavirus</taxon>
    </lineage>
</organism>